<keyword id="KW-0238">DNA-binding</keyword>
<keyword id="KW-0539">Nucleus</keyword>
<keyword id="KW-1185">Reference proteome</keyword>
<keyword id="KW-0804">Transcription</keyword>
<keyword id="KW-0805">Transcription regulation</keyword>
<organism>
    <name type="scientific">Arabidopsis thaliana</name>
    <name type="common">Mouse-ear cress</name>
    <dbReference type="NCBI Taxonomy" id="3702"/>
    <lineage>
        <taxon>Eukaryota</taxon>
        <taxon>Viridiplantae</taxon>
        <taxon>Streptophyta</taxon>
        <taxon>Embryophyta</taxon>
        <taxon>Tracheophyta</taxon>
        <taxon>Spermatophyta</taxon>
        <taxon>Magnoliopsida</taxon>
        <taxon>eudicotyledons</taxon>
        <taxon>Gunneridae</taxon>
        <taxon>Pentapetalae</taxon>
        <taxon>rosids</taxon>
        <taxon>malvids</taxon>
        <taxon>Brassicales</taxon>
        <taxon>Brassicaceae</taxon>
        <taxon>Camelineae</taxon>
        <taxon>Arabidopsis</taxon>
    </lineage>
</organism>
<comment type="function">
    <text evidence="1">Probable transcription factor.</text>
</comment>
<comment type="subcellular location">
    <subcellularLocation>
        <location evidence="2">Nucleus</location>
    </subcellularLocation>
</comment>
<comment type="sequence caution" evidence="5">
    <conflict type="erroneous gene model prediction">
        <sequence resource="EMBL-CDS" id="CAA18742"/>
    </conflict>
</comment>
<comment type="sequence caution" evidence="5">
    <conflict type="erroneous gene model prediction">
        <sequence resource="EMBL-CDS" id="CAB80244"/>
    </conflict>
</comment>
<name>NLP2_ARATH</name>
<dbReference type="EMBL" id="AL022604">
    <property type="protein sequence ID" value="CAA18742.1"/>
    <property type="status" value="ALT_SEQ"/>
    <property type="molecule type" value="Genomic_DNA"/>
</dbReference>
<dbReference type="EMBL" id="AL161587">
    <property type="protein sequence ID" value="CAB80244.1"/>
    <property type="status" value="ALT_SEQ"/>
    <property type="molecule type" value="Genomic_DNA"/>
</dbReference>
<dbReference type="EMBL" id="CP002687">
    <property type="protein sequence ID" value="AEE86488.1"/>
    <property type="molecule type" value="Genomic_DNA"/>
</dbReference>
<dbReference type="EMBL" id="CP002687">
    <property type="protein sequence ID" value="ANM66175.1"/>
    <property type="molecule type" value="Genomic_DNA"/>
</dbReference>
<dbReference type="EMBL" id="CP002687">
    <property type="protein sequence ID" value="ANM66176.1"/>
    <property type="molecule type" value="Genomic_DNA"/>
</dbReference>
<dbReference type="EMBL" id="CP002687">
    <property type="protein sequence ID" value="ANM66177.1"/>
    <property type="molecule type" value="Genomic_DNA"/>
</dbReference>
<dbReference type="EMBL" id="AJ579912">
    <property type="protein sequence ID" value="CAE30326.1"/>
    <property type="molecule type" value="mRNA"/>
</dbReference>
<dbReference type="PIR" id="T06130">
    <property type="entry name" value="T06130"/>
</dbReference>
<dbReference type="RefSeq" id="NP_001320140.1">
    <property type="nucleotide sequence ID" value="NM_001342332.1"/>
</dbReference>
<dbReference type="RefSeq" id="NP_001328087.1">
    <property type="nucleotide sequence ID" value="NM_001342333.1"/>
</dbReference>
<dbReference type="RefSeq" id="NP_001328088.1">
    <property type="nucleotide sequence ID" value="NM_001342334.1"/>
</dbReference>
<dbReference type="RefSeq" id="NP_195253.4">
    <property type="nucleotide sequence ID" value="NM_119693.5"/>
</dbReference>
<dbReference type="SMR" id="Q7X9B9"/>
<dbReference type="FunCoup" id="Q7X9B9">
    <property type="interactions" value="110"/>
</dbReference>
<dbReference type="STRING" id="3702.Q7X9B9"/>
<dbReference type="PaxDb" id="3702-AT4G35270.1"/>
<dbReference type="ProteomicsDB" id="251175"/>
<dbReference type="EnsemblPlants" id="AT4G35270.1">
    <property type="protein sequence ID" value="AT4G35270.1"/>
    <property type="gene ID" value="AT4G35270"/>
</dbReference>
<dbReference type="EnsemblPlants" id="AT4G35270.2">
    <property type="protein sequence ID" value="AT4G35270.2"/>
    <property type="gene ID" value="AT4G35270"/>
</dbReference>
<dbReference type="EnsemblPlants" id="AT4G35270.3">
    <property type="protein sequence ID" value="AT4G35270.3"/>
    <property type="gene ID" value="AT4G35270"/>
</dbReference>
<dbReference type="EnsemblPlants" id="AT4G35270.4">
    <property type="protein sequence ID" value="AT4G35270.4"/>
    <property type="gene ID" value="AT4G35270"/>
</dbReference>
<dbReference type="GeneID" id="829680"/>
<dbReference type="Gramene" id="AT4G35270.1">
    <property type="protein sequence ID" value="AT4G35270.1"/>
    <property type="gene ID" value="AT4G35270"/>
</dbReference>
<dbReference type="Gramene" id="AT4G35270.2">
    <property type="protein sequence ID" value="AT4G35270.2"/>
    <property type="gene ID" value="AT4G35270"/>
</dbReference>
<dbReference type="Gramene" id="AT4G35270.3">
    <property type="protein sequence ID" value="AT4G35270.3"/>
    <property type="gene ID" value="AT4G35270"/>
</dbReference>
<dbReference type="Gramene" id="AT4G35270.4">
    <property type="protein sequence ID" value="AT4G35270.4"/>
    <property type="gene ID" value="AT4G35270"/>
</dbReference>
<dbReference type="KEGG" id="ath:AT4G35270"/>
<dbReference type="Araport" id="AT4G35270"/>
<dbReference type="TAIR" id="AT4G35270">
    <property type="gene designation" value="NLP2"/>
</dbReference>
<dbReference type="eggNOG" id="ENOG502QQ6H">
    <property type="taxonomic scope" value="Eukaryota"/>
</dbReference>
<dbReference type="HOGENOM" id="CLU_008971_0_0_1"/>
<dbReference type="InParanoid" id="Q7X9B9"/>
<dbReference type="OMA" id="FLIQIWV"/>
<dbReference type="PRO" id="PR:Q7X9B9"/>
<dbReference type="Proteomes" id="UP000006548">
    <property type="component" value="Chromosome 4"/>
</dbReference>
<dbReference type="ExpressionAtlas" id="Q7X9B9">
    <property type="expression patterns" value="baseline and differential"/>
</dbReference>
<dbReference type="GO" id="GO:0005634">
    <property type="term" value="C:nucleus"/>
    <property type="evidence" value="ECO:0007669"/>
    <property type="project" value="UniProtKB-SubCell"/>
</dbReference>
<dbReference type="GO" id="GO:0003677">
    <property type="term" value="F:DNA binding"/>
    <property type="evidence" value="ECO:0007669"/>
    <property type="project" value="UniProtKB-KW"/>
</dbReference>
<dbReference type="GO" id="GO:0003700">
    <property type="term" value="F:DNA-binding transcription factor activity"/>
    <property type="evidence" value="ECO:0000250"/>
    <property type="project" value="TAIR"/>
</dbReference>
<dbReference type="GO" id="GO:0006355">
    <property type="term" value="P:regulation of DNA-templated transcription"/>
    <property type="evidence" value="ECO:0000304"/>
    <property type="project" value="TAIR"/>
</dbReference>
<dbReference type="CDD" id="cd06407">
    <property type="entry name" value="PB1_NLP"/>
    <property type="match status" value="1"/>
</dbReference>
<dbReference type="FunFam" id="3.10.20.90:FF:000186">
    <property type="entry name" value="RWP-RK domain-containing protein"/>
    <property type="match status" value="1"/>
</dbReference>
<dbReference type="Gene3D" id="3.10.20.90">
    <property type="entry name" value="Phosphatidylinositol 3-kinase Catalytic Subunit, Chain A, domain 1"/>
    <property type="match status" value="1"/>
</dbReference>
<dbReference type="InterPro" id="IPR045012">
    <property type="entry name" value="NLP"/>
</dbReference>
<dbReference type="InterPro" id="IPR055081">
    <property type="entry name" value="NLP1-9_GAF"/>
</dbReference>
<dbReference type="InterPro" id="IPR053793">
    <property type="entry name" value="PB1-like"/>
</dbReference>
<dbReference type="InterPro" id="IPR000270">
    <property type="entry name" value="PB1_dom"/>
</dbReference>
<dbReference type="InterPro" id="IPR034891">
    <property type="entry name" value="PB1_NLP"/>
</dbReference>
<dbReference type="InterPro" id="IPR003035">
    <property type="entry name" value="RWP-RK_dom"/>
</dbReference>
<dbReference type="PANTHER" id="PTHR32002:SF46">
    <property type="entry name" value="PROTEIN NLP2"/>
    <property type="match status" value="1"/>
</dbReference>
<dbReference type="PANTHER" id="PTHR32002">
    <property type="entry name" value="PROTEIN NLP8"/>
    <property type="match status" value="1"/>
</dbReference>
<dbReference type="Pfam" id="PF22922">
    <property type="entry name" value="GAF_NLP"/>
    <property type="match status" value="1"/>
</dbReference>
<dbReference type="Pfam" id="PF00564">
    <property type="entry name" value="PB1"/>
    <property type="match status" value="1"/>
</dbReference>
<dbReference type="Pfam" id="PF02042">
    <property type="entry name" value="RWP-RK"/>
    <property type="match status" value="1"/>
</dbReference>
<dbReference type="SMART" id="SM00666">
    <property type="entry name" value="PB1"/>
    <property type="match status" value="1"/>
</dbReference>
<dbReference type="SUPFAM" id="SSF54277">
    <property type="entry name" value="CAD &amp; PB1 domains"/>
    <property type="match status" value="1"/>
</dbReference>
<dbReference type="PROSITE" id="PS51745">
    <property type="entry name" value="PB1"/>
    <property type="match status" value="1"/>
</dbReference>
<dbReference type="PROSITE" id="PS51519">
    <property type="entry name" value="RWP_RK"/>
    <property type="match status" value="1"/>
</dbReference>
<accession>Q7X9B9</accession>
<accession>F4JMB1</accession>
<accession>O65500</accession>
<protein>
    <recommendedName>
        <fullName>Protein NLP2</fullName>
        <shortName>AtNLP2</shortName>
    </recommendedName>
    <alternativeName>
        <fullName>NIN-like protein 2</fullName>
    </alternativeName>
    <alternativeName>
        <fullName>Nodule inception protein-like protein 2</fullName>
    </alternativeName>
</protein>
<sequence>MEGGRGGGDGNFLPNSNFGVFSDSAMDMDFMDELLFDGCWLETTDGKSLKQTMGQQVSDSTTMNDNNNNSYLYGYQYAENLSQDHISNEETGRKFPPIPPGFLKIEDLSNQVPFDQSAVMSSAQAEKFLLEESEGGRRYWIAPRTSQGPSSSVKERLVQAIEGLNEEVQDKDFLIQIWLPIQQEGKNFLTTSEQPHFFNPKYSSLKRYRDVSVAYNFLADEDSKESVGLPGRVFLKKLPEWTPDVRFFRSEEYPRIKEAEQCDVRGSLALPVFERGSGTCLGVVEIVTTTQKMNYRPELDNICKALESVNLRSSRSLNPPSREFLQVYNEFYYAALPEVSEFLTLVCRVYDLPLALTWAPCARQGKVGSRHSDENFSECVSTVDDACIVPDHQSRHFLEACSEHHLLQGEGIVGKAFNATKLFFVPEVTTFSKTNYPLAHHAKISGLHAALAVPLKNKFNSSVEFVLEFFFPKACLDTEAQQDMLKSLSATLQQDFRSLNLFIDKELELEVVFPVREEVVFAENPLINAGTGEDMKPLPLEEISQEDSSWISHMIKANEKGKGVSLSWEYQKEEPKEEFMLTSGWDNNQIGSGHNNFLSEAEQFQKVTNSGLRIDMDPSFESASFGVGQTLLGSRRPGEKRRTKTEKTIGLEVLRQYFAGSLKDAAKSIGVCPTTLKRICRQHGITRWPSRKIKKVGHSLKKLQLVIDSVQGVQGSIQLDSFYTSFPELSSPHMSGTGTSFKNPNAQTENGVSAQGTAAAPKSPPSSSCSHSSGSSTCCSTGANQSTNTGTTSNTVTTLMAENASAILKRARSEVRLHTMNQDETKSLSRTLSHKTFSEHPLFENPPRLPENSSRKLKAGGASKVKATFGEAKVRFTLLPTWGFRELQHEIARRFNIDNIAPFDLKYLDDDKEWVLLTCEADLEECIDIYRSSQSRTIKISVHEASQVKLGGSFGSIGLGPSL</sequence>
<reference key="1">
    <citation type="journal article" date="1999" name="Nature">
        <title>Sequence and analysis of chromosome 4 of the plant Arabidopsis thaliana.</title>
        <authorList>
            <person name="Mayer K.F.X."/>
            <person name="Schueller C."/>
            <person name="Wambutt R."/>
            <person name="Murphy G."/>
            <person name="Volckaert G."/>
            <person name="Pohl T."/>
            <person name="Duesterhoeft A."/>
            <person name="Stiekema W."/>
            <person name="Entian K.-D."/>
            <person name="Terryn N."/>
            <person name="Harris B."/>
            <person name="Ansorge W."/>
            <person name="Brandt P."/>
            <person name="Grivell L.A."/>
            <person name="Rieger M."/>
            <person name="Weichselgartner M."/>
            <person name="de Simone V."/>
            <person name="Obermaier B."/>
            <person name="Mache R."/>
            <person name="Mueller M."/>
            <person name="Kreis M."/>
            <person name="Delseny M."/>
            <person name="Puigdomenech P."/>
            <person name="Watson M."/>
            <person name="Schmidtheini T."/>
            <person name="Reichert B."/>
            <person name="Portetelle D."/>
            <person name="Perez-Alonso M."/>
            <person name="Boutry M."/>
            <person name="Bancroft I."/>
            <person name="Vos P."/>
            <person name="Hoheisel J."/>
            <person name="Zimmermann W."/>
            <person name="Wedler H."/>
            <person name="Ridley P."/>
            <person name="Langham S.-A."/>
            <person name="McCullagh B."/>
            <person name="Bilham L."/>
            <person name="Robben J."/>
            <person name="van der Schueren J."/>
            <person name="Grymonprez B."/>
            <person name="Chuang Y.-J."/>
            <person name="Vandenbussche F."/>
            <person name="Braeken M."/>
            <person name="Weltjens I."/>
            <person name="Voet M."/>
            <person name="Bastiaens I."/>
            <person name="Aert R."/>
            <person name="Defoor E."/>
            <person name="Weitzenegger T."/>
            <person name="Bothe G."/>
            <person name="Ramsperger U."/>
            <person name="Hilbert H."/>
            <person name="Braun M."/>
            <person name="Holzer E."/>
            <person name="Brandt A."/>
            <person name="Peters S."/>
            <person name="van Staveren M."/>
            <person name="Dirkse W."/>
            <person name="Mooijman P."/>
            <person name="Klein Lankhorst R."/>
            <person name="Rose M."/>
            <person name="Hauf J."/>
            <person name="Koetter P."/>
            <person name="Berneiser S."/>
            <person name="Hempel S."/>
            <person name="Feldpausch M."/>
            <person name="Lamberth S."/>
            <person name="Van den Daele H."/>
            <person name="De Keyser A."/>
            <person name="Buysshaert C."/>
            <person name="Gielen J."/>
            <person name="Villarroel R."/>
            <person name="De Clercq R."/>
            <person name="van Montagu M."/>
            <person name="Rogers J."/>
            <person name="Cronin A."/>
            <person name="Quail M.A."/>
            <person name="Bray-Allen S."/>
            <person name="Clark L."/>
            <person name="Doggett J."/>
            <person name="Hall S."/>
            <person name="Kay M."/>
            <person name="Lennard N."/>
            <person name="McLay K."/>
            <person name="Mayes R."/>
            <person name="Pettett A."/>
            <person name="Rajandream M.A."/>
            <person name="Lyne M."/>
            <person name="Benes V."/>
            <person name="Rechmann S."/>
            <person name="Borkova D."/>
            <person name="Bloecker H."/>
            <person name="Scharfe M."/>
            <person name="Grimm M."/>
            <person name="Loehnert T.-H."/>
            <person name="Dose S."/>
            <person name="de Haan M."/>
            <person name="Maarse A.C."/>
            <person name="Schaefer M."/>
            <person name="Mueller-Auer S."/>
            <person name="Gabel C."/>
            <person name="Fuchs M."/>
            <person name="Fartmann B."/>
            <person name="Granderath K."/>
            <person name="Dauner D."/>
            <person name="Herzl A."/>
            <person name="Neumann S."/>
            <person name="Argiriou A."/>
            <person name="Vitale D."/>
            <person name="Liguori R."/>
            <person name="Piravandi E."/>
            <person name="Massenet O."/>
            <person name="Quigley F."/>
            <person name="Clabauld G."/>
            <person name="Muendlein A."/>
            <person name="Felber R."/>
            <person name="Schnabl S."/>
            <person name="Hiller R."/>
            <person name="Schmidt W."/>
            <person name="Lecharny A."/>
            <person name="Aubourg S."/>
            <person name="Chefdor F."/>
            <person name="Cooke R."/>
            <person name="Berger C."/>
            <person name="Monfort A."/>
            <person name="Casacuberta E."/>
            <person name="Gibbons T."/>
            <person name="Weber N."/>
            <person name="Vandenbol M."/>
            <person name="Bargues M."/>
            <person name="Terol J."/>
            <person name="Torres A."/>
            <person name="Perez-Perez A."/>
            <person name="Purnelle B."/>
            <person name="Bent E."/>
            <person name="Johnson S."/>
            <person name="Tacon D."/>
            <person name="Jesse T."/>
            <person name="Heijnen L."/>
            <person name="Schwarz S."/>
            <person name="Scholler P."/>
            <person name="Heber S."/>
            <person name="Francs P."/>
            <person name="Bielke C."/>
            <person name="Frishman D."/>
            <person name="Haase D."/>
            <person name="Lemcke K."/>
            <person name="Mewes H.-W."/>
            <person name="Stocker S."/>
            <person name="Zaccaria P."/>
            <person name="Bevan M."/>
            <person name="Wilson R.K."/>
            <person name="de la Bastide M."/>
            <person name="Habermann K."/>
            <person name="Parnell L."/>
            <person name="Dedhia N."/>
            <person name="Gnoj L."/>
            <person name="Schutz K."/>
            <person name="Huang E."/>
            <person name="Spiegel L."/>
            <person name="Sekhon M."/>
            <person name="Murray J."/>
            <person name="Sheet P."/>
            <person name="Cordes M."/>
            <person name="Abu-Threideh J."/>
            <person name="Stoneking T."/>
            <person name="Kalicki J."/>
            <person name="Graves T."/>
            <person name="Harmon G."/>
            <person name="Edwards J."/>
            <person name="Latreille P."/>
            <person name="Courtney L."/>
            <person name="Cloud J."/>
            <person name="Abbott A."/>
            <person name="Scott K."/>
            <person name="Johnson D."/>
            <person name="Minx P."/>
            <person name="Bentley D."/>
            <person name="Fulton B."/>
            <person name="Miller N."/>
            <person name="Greco T."/>
            <person name="Kemp K."/>
            <person name="Kramer J."/>
            <person name="Fulton L."/>
            <person name="Mardis E."/>
            <person name="Dante M."/>
            <person name="Pepin K."/>
            <person name="Hillier L.W."/>
            <person name="Nelson J."/>
            <person name="Spieth J."/>
            <person name="Ryan E."/>
            <person name="Andrews S."/>
            <person name="Geisel C."/>
            <person name="Layman D."/>
            <person name="Du H."/>
            <person name="Ali J."/>
            <person name="Berghoff A."/>
            <person name="Jones K."/>
            <person name="Drone K."/>
            <person name="Cotton M."/>
            <person name="Joshu C."/>
            <person name="Antonoiu B."/>
            <person name="Zidanic M."/>
            <person name="Strong C."/>
            <person name="Sun H."/>
            <person name="Lamar B."/>
            <person name="Yordan C."/>
            <person name="Ma P."/>
            <person name="Zhong J."/>
            <person name="Preston R."/>
            <person name="Vil D."/>
            <person name="Shekher M."/>
            <person name="Matero A."/>
            <person name="Shah R."/>
            <person name="Swaby I.K."/>
            <person name="O'Shaughnessy A."/>
            <person name="Rodriguez M."/>
            <person name="Hoffman J."/>
            <person name="Till S."/>
            <person name="Granat S."/>
            <person name="Shohdy N."/>
            <person name="Hasegawa A."/>
            <person name="Hameed A."/>
            <person name="Lodhi M."/>
            <person name="Johnson A."/>
            <person name="Chen E."/>
            <person name="Marra M.A."/>
            <person name="Martienssen R."/>
            <person name="McCombie W.R."/>
        </authorList>
    </citation>
    <scope>NUCLEOTIDE SEQUENCE [LARGE SCALE GENOMIC DNA]</scope>
    <source>
        <strain>cv. Columbia</strain>
    </source>
</reference>
<reference key="2">
    <citation type="journal article" date="2017" name="Plant J.">
        <title>Araport11: a complete reannotation of the Arabidopsis thaliana reference genome.</title>
        <authorList>
            <person name="Cheng C.Y."/>
            <person name="Krishnakumar V."/>
            <person name="Chan A.P."/>
            <person name="Thibaud-Nissen F."/>
            <person name="Schobel S."/>
            <person name="Town C.D."/>
        </authorList>
    </citation>
    <scope>GENOME REANNOTATION</scope>
    <source>
        <strain>cv. Columbia</strain>
    </source>
</reference>
<reference key="3">
    <citation type="journal article" date="2005" name="J. Mol. Evol.">
        <title>Evolution of NIN-like proteins in Arabidopsis, rice, and Lotus japonicus.</title>
        <authorList>
            <person name="Schauser L."/>
            <person name="Wieloch W."/>
            <person name="Stougaard J."/>
        </authorList>
    </citation>
    <scope>NUCLEOTIDE SEQUENCE [MRNA] OF 573-861</scope>
    <scope>GENE FAMILY</scope>
    <scope>NOMENCLATURE</scope>
    <source>
        <tissue>Root nodule</tissue>
    </source>
</reference>
<proteinExistence type="evidence at transcript level"/>
<feature type="chain" id="PRO_0000401487" description="Protein NLP2">
    <location>
        <begin position="1"/>
        <end position="963"/>
    </location>
</feature>
<feature type="domain" description="RWP-RK" evidence="2">
    <location>
        <begin position="635"/>
        <end position="716"/>
    </location>
</feature>
<feature type="domain" description="PB1" evidence="3">
    <location>
        <begin position="862"/>
        <end position="945"/>
    </location>
</feature>
<feature type="region of interest" description="Disordered" evidence="4">
    <location>
        <begin position="734"/>
        <end position="794"/>
    </location>
</feature>
<feature type="compositionally biased region" description="Polar residues" evidence="4">
    <location>
        <begin position="734"/>
        <end position="755"/>
    </location>
</feature>
<feature type="compositionally biased region" description="Low complexity" evidence="4">
    <location>
        <begin position="756"/>
        <end position="794"/>
    </location>
</feature>
<gene>
    <name type="primary">NLP2</name>
    <name type="ordered locus">At4g35270</name>
    <name type="ORF">F23E12.170</name>
</gene>
<evidence type="ECO:0000250" key="1"/>
<evidence type="ECO:0000255" key="2">
    <source>
        <dbReference type="PROSITE-ProRule" id="PRU00852"/>
    </source>
</evidence>
<evidence type="ECO:0000255" key="3">
    <source>
        <dbReference type="PROSITE-ProRule" id="PRU01081"/>
    </source>
</evidence>
<evidence type="ECO:0000256" key="4">
    <source>
        <dbReference type="SAM" id="MobiDB-lite"/>
    </source>
</evidence>
<evidence type="ECO:0000305" key="5"/>